<dbReference type="EMBL" id="AP008934">
    <property type="protein sequence ID" value="BAE17815.1"/>
    <property type="molecule type" value="Genomic_DNA"/>
</dbReference>
<dbReference type="RefSeq" id="WP_002482619.1">
    <property type="nucleotide sequence ID" value="NZ_MTGA01000036.1"/>
</dbReference>
<dbReference type="SMR" id="Q49ZG1"/>
<dbReference type="GeneID" id="66866817"/>
<dbReference type="KEGG" id="ssp:SSP0670"/>
<dbReference type="eggNOG" id="COG0197">
    <property type="taxonomic scope" value="Bacteria"/>
</dbReference>
<dbReference type="HOGENOM" id="CLU_078858_2_1_9"/>
<dbReference type="OrthoDB" id="9802589at2"/>
<dbReference type="Proteomes" id="UP000006371">
    <property type="component" value="Chromosome"/>
</dbReference>
<dbReference type="GO" id="GO:0022625">
    <property type="term" value="C:cytosolic large ribosomal subunit"/>
    <property type="evidence" value="ECO:0007669"/>
    <property type="project" value="TreeGrafter"/>
</dbReference>
<dbReference type="GO" id="GO:0019843">
    <property type="term" value="F:rRNA binding"/>
    <property type="evidence" value="ECO:0007669"/>
    <property type="project" value="UniProtKB-UniRule"/>
</dbReference>
<dbReference type="GO" id="GO:0003735">
    <property type="term" value="F:structural constituent of ribosome"/>
    <property type="evidence" value="ECO:0007669"/>
    <property type="project" value="InterPro"/>
</dbReference>
<dbReference type="GO" id="GO:0000049">
    <property type="term" value="F:tRNA binding"/>
    <property type="evidence" value="ECO:0007669"/>
    <property type="project" value="UniProtKB-KW"/>
</dbReference>
<dbReference type="GO" id="GO:0006412">
    <property type="term" value="P:translation"/>
    <property type="evidence" value="ECO:0007669"/>
    <property type="project" value="UniProtKB-UniRule"/>
</dbReference>
<dbReference type="CDD" id="cd01433">
    <property type="entry name" value="Ribosomal_L16_L10e"/>
    <property type="match status" value="1"/>
</dbReference>
<dbReference type="FunFam" id="3.90.1170.10:FF:000001">
    <property type="entry name" value="50S ribosomal protein L16"/>
    <property type="match status" value="1"/>
</dbReference>
<dbReference type="Gene3D" id="3.90.1170.10">
    <property type="entry name" value="Ribosomal protein L10e/L16"/>
    <property type="match status" value="1"/>
</dbReference>
<dbReference type="HAMAP" id="MF_01342">
    <property type="entry name" value="Ribosomal_uL16"/>
    <property type="match status" value="1"/>
</dbReference>
<dbReference type="InterPro" id="IPR047873">
    <property type="entry name" value="Ribosomal_uL16"/>
</dbReference>
<dbReference type="InterPro" id="IPR000114">
    <property type="entry name" value="Ribosomal_uL16_bact-type"/>
</dbReference>
<dbReference type="InterPro" id="IPR020798">
    <property type="entry name" value="Ribosomal_uL16_CS"/>
</dbReference>
<dbReference type="InterPro" id="IPR016180">
    <property type="entry name" value="Ribosomal_uL16_dom"/>
</dbReference>
<dbReference type="InterPro" id="IPR036920">
    <property type="entry name" value="Ribosomal_uL16_sf"/>
</dbReference>
<dbReference type="NCBIfam" id="TIGR01164">
    <property type="entry name" value="rplP_bact"/>
    <property type="match status" value="1"/>
</dbReference>
<dbReference type="PANTHER" id="PTHR12220">
    <property type="entry name" value="50S/60S RIBOSOMAL PROTEIN L16"/>
    <property type="match status" value="1"/>
</dbReference>
<dbReference type="PANTHER" id="PTHR12220:SF13">
    <property type="entry name" value="LARGE RIBOSOMAL SUBUNIT PROTEIN UL16M"/>
    <property type="match status" value="1"/>
</dbReference>
<dbReference type="Pfam" id="PF00252">
    <property type="entry name" value="Ribosomal_L16"/>
    <property type="match status" value="1"/>
</dbReference>
<dbReference type="PRINTS" id="PR00060">
    <property type="entry name" value="RIBOSOMALL16"/>
</dbReference>
<dbReference type="SUPFAM" id="SSF54686">
    <property type="entry name" value="Ribosomal protein L16p/L10e"/>
    <property type="match status" value="1"/>
</dbReference>
<dbReference type="PROSITE" id="PS00586">
    <property type="entry name" value="RIBOSOMAL_L16_1"/>
    <property type="match status" value="1"/>
</dbReference>
<dbReference type="PROSITE" id="PS00701">
    <property type="entry name" value="RIBOSOMAL_L16_2"/>
    <property type="match status" value="1"/>
</dbReference>
<comment type="function">
    <text evidence="1">Binds 23S rRNA and is also seen to make contacts with the A and possibly P site tRNAs.</text>
</comment>
<comment type="subunit">
    <text evidence="1">Part of the 50S ribosomal subunit.</text>
</comment>
<comment type="similarity">
    <text evidence="1">Belongs to the universal ribosomal protein uL16 family.</text>
</comment>
<sequence length="144" mass="16255">MLLPKRVKYRRQHRPKTTGRSKGGNYVTFGEYGLQATTTSWITSRQIESARIAMTRFMKRGGKVWIKIFPHTPYTQKPLEVRMGAGKGAVEGWIAVAKPGRILFEIAGVNEEVAREALRLASHKLPVKTKFVKREELGGETNES</sequence>
<proteinExistence type="inferred from homology"/>
<accession>Q49ZG1</accession>
<feature type="chain" id="PRO_0000062212" description="Large ribosomal subunit protein uL16">
    <location>
        <begin position="1"/>
        <end position="144"/>
    </location>
</feature>
<feature type="region of interest" description="Disordered" evidence="2">
    <location>
        <begin position="1"/>
        <end position="23"/>
    </location>
</feature>
<feature type="compositionally biased region" description="Basic residues" evidence="2">
    <location>
        <begin position="1"/>
        <end position="19"/>
    </location>
</feature>
<gene>
    <name evidence="1" type="primary">rplP</name>
    <name type="ordered locus">SSP0670</name>
</gene>
<name>RL16_STAS1</name>
<protein>
    <recommendedName>
        <fullName evidence="1">Large ribosomal subunit protein uL16</fullName>
    </recommendedName>
    <alternativeName>
        <fullName evidence="3">50S ribosomal protein L16</fullName>
    </alternativeName>
</protein>
<organism>
    <name type="scientific">Staphylococcus saprophyticus subsp. saprophyticus (strain ATCC 15305 / DSM 20229 / NCIMB 8711 / NCTC 7292 / S-41)</name>
    <dbReference type="NCBI Taxonomy" id="342451"/>
    <lineage>
        <taxon>Bacteria</taxon>
        <taxon>Bacillati</taxon>
        <taxon>Bacillota</taxon>
        <taxon>Bacilli</taxon>
        <taxon>Bacillales</taxon>
        <taxon>Staphylococcaceae</taxon>
        <taxon>Staphylococcus</taxon>
    </lineage>
</organism>
<reference key="1">
    <citation type="journal article" date="2005" name="Proc. Natl. Acad. Sci. U.S.A.">
        <title>Whole genome sequence of Staphylococcus saprophyticus reveals the pathogenesis of uncomplicated urinary tract infection.</title>
        <authorList>
            <person name="Kuroda M."/>
            <person name="Yamashita A."/>
            <person name="Hirakawa H."/>
            <person name="Kumano M."/>
            <person name="Morikawa K."/>
            <person name="Higashide M."/>
            <person name="Maruyama A."/>
            <person name="Inose Y."/>
            <person name="Matoba K."/>
            <person name="Toh H."/>
            <person name="Kuhara S."/>
            <person name="Hattori M."/>
            <person name="Ohta T."/>
        </authorList>
    </citation>
    <scope>NUCLEOTIDE SEQUENCE [LARGE SCALE GENOMIC DNA]</scope>
    <source>
        <strain>ATCC 15305 / DSM 20229 / NCIMB 8711 / NCTC 7292 / S-41</strain>
    </source>
</reference>
<evidence type="ECO:0000255" key="1">
    <source>
        <dbReference type="HAMAP-Rule" id="MF_01342"/>
    </source>
</evidence>
<evidence type="ECO:0000256" key="2">
    <source>
        <dbReference type="SAM" id="MobiDB-lite"/>
    </source>
</evidence>
<evidence type="ECO:0000305" key="3"/>
<keyword id="KW-1185">Reference proteome</keyword>
<keyword id="KW-0687">Ribonucleoprotein</keyword>
<keyword id="KW-0689">Ribosomal protein</keyword>
<keyword id="KW-0694">RNA-binding</keyword>
<keyword id="KW-0699">rRNA-binding</keyword>
<keyword id="KW-0820">tRNA-binding</keyword>